<protein>
    <recommendedName>
        <fullName evidence="1">Magnesium-protoporphyrin IX monomethyl ester [oxidative] cyclase</fullName>
        <shortName evidence="1">Mg-protoporphyrin IX monomethyl ester oxidative cyclase</shortName>
        <ecNumber evidence="1">1.14.13.81</ecNumber>
    </recommendedName>
</protein>
<comment type="function">
    <text evidence="1">Catalyzes the formation of the isocyclic ring in chlorophyll biosynthesis. Mediates the cyclase reaction, which results in the formation of divinylprotochlorophyllide (Pchlide) characteristic of all chlorophylls from magnesium-protoporphyrin IX 13-monomethyl ester (MgPMME).</text>
</comment>
<comment type="catalytic activity">
    <reaction evidence="1">
        <text>Mg-protoporphyrin IX 13-monomethyl ester + 3 NADPH + 3 O2 + 2 H(+) = 3,8-divinyl protochlorophyllide a + 3 NADP(+) + 5 H2O</text>
        <dbReference type="Rhea" id="RHEA:33235"/>
        <dbReference type="ChEBI" id="CHEBI:15377"/>
        <dbReference type="ChEBI" id="CHEBI:15378"/>
        <dbReference type="ChEBI" id="CHEBI:15379"/>
        <dbReference type="ChEBI" id="CHEBI:57783"/>
        <dbReference type="ChEBI" id="CHEBI:58349"/>
        <dbReference type="ChEBI" id="CHEBI:58632"/>
        <dbReference type="ChEBI" id="CHEBI:60491"/>
        <dbReference type="EC" id="1.14.13.81"/>
    </reaction>
</comment>
<comment type="cofactor">
    <cofactor evidence="1">
        <name>Fe cation</name>
        <dbReference type="ChEBI" id="CHEBI:24875"/>
    </cofactor>
</comment>
<comment type="pathway">
    <text evidence="1">Porphyrin-containing compound metabolism; chlorophyll biosynthesis (light-independent).</text>
</comment>
<comment type="similarity">
    <text evidence="1">Belongs to the AcsF family.</text>
</comment>
<organism>
    <name type="scientific">Prochlorococcus marinus (strain MIT 9303)</name>
    <dbReference type="NCBI Taxonomy" id="59922"/>
    <lineage>
        <taxon>Bacteria</taxon>
        <taxon>Bacillati</taxon>
        <taxon>Cyanobacteriota</taxon>
        <taxon>Cyanophyceae</taxon>
        <taxon>Synechococcales</taxon>
        <taxon>Prochlorococcaceae</taxon>
        <taxon>Prochlorococcus</taxon>
    </lineage>
</organism>
<accession>A2CDU0</accession>
<reference key="1">
    <citation type="journal article" date="2007" name="PLoS Genet.">
        <title>Patterns and implications of gene gain and loss in the evolution of Prochlorococcus.</title>
        <authorList>
            <person name="Kettler G.C."/>
            <person name="Martiny A.C."/>
            <person name="Huang K."/>
            <person name="Zucker J."/>
            <person name="Coleman M.L."/>
            <person name="Rodrigue S."/>
            <person name="Chen F."/>
            <person name="Lapidus A."/>
            <person name="Ferriera S."/>
            <person name="Johnson J."/>
            <person name="Steglich C."/>
            <person name="Church G.M."/>
            <person name="Richardson P."/>
            <person name="Chisholm S.W."/>
        </authorList>
    </citation>
    <scope>NUCLEOTIDE SEQUENCE [LARGE SCALE GENOMIC DNA]</scope>
    <source>
        <strain>MIT 9303</strain>
    </source>
</reference>
<feature type="chain" id="PRO_1000188411" description="Magnesium-protoporphyrin IX monomethyl ester [oxidative] cyclase">
    <location>
        <begin position="1"/>
        <end position="349"/>
    </location>
</feature>
<feature type="region of interest" description="Disordered" evidence="2">
    <location>
        <begin position="1"/>
        <end position="23"/>
    </location>
</feature>
<feature type="compositionally biased region" description="Low complexity" evidence="2">
    <location>
        <begin position="1"/>
        <end position="10"/>
    </location>
</feature>
<evidence type="ECO:0000255" key="1">
    <source>
        <dbReference type="HAMAP-Rule" id="MF_01840"/>
    </source>
</evidence>
<evidence type="ECO:0000256" key="2">
    <source>
        <dbReference type="SAM" id="MobiDB-lite"/>
    </source>
</evidence>
<keyword id="KW-0149">Chlorophyll biosynthesis</keyword>
<keyword id="KW-0408">Iron</keyword>
<keyword id="KW-0479">Metal-binding</keyword>
<keyword id="KW-0521">NADP</keyword>
<keyword id="KW-0560">Oxidoreductase</keyword>
<keyword id="KW-0602">Photosynthesis</keyword>
<gene>
    <name evidence="1" type="primary">acsF</name>
    <name type="ordered locus">P9303_29201</name>
</gene>
<proteinExistence type="inferred from homology"/>
<sequence>MTATTATAPAMRGGGRNELPPHLDDNLLTPRFYTTEFDKAAKTDLDIARKDFEAMFKEMEADYNLKHFDRKASLERLADLSPEDKAIYESYLVRSVVSEFSGFLLFKEISNRFKKAGRQELGQFFTFLARDEARHAGFLGRALKAEGINVDLPNLGNKRAPTFFPLSWVLYSLYLSEKIGYWRYILINRHLNDNPEKVCAPLFDFFEPWCQDENRHGDCINLMMRCWPGMTKGFRGKLLSRFFLWSVFLTHTLTVCERGDFYGLLGIDPVLFDEEVIVQTNNTSRNAFPWVYNFDDGKFLEMRMQILKAFRNWRESSGLAKPVALSKFVSLILRQFALPMQKTNAVRYG</sequence>
<dbReference type="EC" id="1.14.13.81" evidence="1"/>
<dbReference type="EMBL" id="CP000554">
    <property type="protein sequence ID" value="ABM79650.1"/>
    <property type="molecule type" value="Genomic_DNA"/>
</dbReference>
<dbReference type="RefSeq" id="WP_011827489.1">
    <property type="nucleotide sequence ID" value="NC_008820.1"/>
</dbReference>
<dbReference type="SMR" id="A2CDU0"/>
<dbReference type="STRING" id="59922.P9303_29201"/>
<dbReference type="KEGG" id="pmf:P9303_29201"/>
<dbReference type="HOGENOM" id="CLU_048037_0_0_3"/>
<dbReference type="BioCyc" id="PMAR59922:G1G80-2562-MONOMER"/>
<dbReference type="UniPathway" id="UPA00670"/>
<dbReference type="Proteomes" id="UP000002274">
    <property type="component" value="Chromosome"/>
</dbReference>
<dbReference type="GO" id="GO:0005506">
    <property type="term" value="F:iron ion binding"/>
    <property type="evidence" value="ECO:0007669"/>
    <property type="project" value="UniProtKB-UniRule"/>
</dbReference>
<dbReference type="GO" id="GO:0048529">
    <property type="term" value="F:magnesium-protoporphyrin IX monomethyl ester (oxidative) cyclase activity"/>
    <property type="evidence" value="ECO:0007669"/>
    <property type="project" value="UniProtKB-UniRule"/>
</dbReference>
<dbReference type="GO" id="GO:0036068">
    <property type="term" value="P:light-independent chlorophyll biosynthetic process"/>
    <property type="evidence" value="ECO:0007669"/>
    <property type="project" value="UniProtKB-UniRule"/>
</dbReference>
<dbReference type="GO" id="GO:0015979">
    <property type="term" value="P:photosynthesis"/>
    <property type="evidence" value="ECO:0007669"/>
    <property type="project" value="UniProtKB-UniRule"/>
</dbReference>
<dbReference type="HAMAP" id="MF_01840">
    <property type="entry name" value="AcsF"/>
    <property type="match status" value="1"/>
</dbReference>
<dbReference type="InterPro" id="IPR008434">
    <property type="entry name" value="AcsF"/>
</dbReference>
<dbReference type="InterPro" id="IPR009078">
    <property type="entry name" value="Ferritin-like_SF"/>
</dbReference>
<dbReference type="InterPro" id="IPR003251">
    <property type="entry name" value="Rr_diiron-bd_dom"/>
</dbReference>
<dbReference type="NCBIfam" id="TIGR02029">
    <property type="entry name" value="AcsF"/>
    <property type="match status" value="1"/>
</dbReference>
<dbReference type="NCBIfam" id="NF010172">
    <property type="entry name" value="PRK13654.1"/>
    <property type="match status" value="1"/>
</dbReference>
<dbReference type="PANTHER" id="PTHR31053">
    <property type="entry name" value="MAGNESIUM-PROTOPORPHYRIN IX MONOMETHYL ESTER [OXIDATIVE] CYCLASE, CHLOROPLASTIC"/>
    <property type="match status" value="1"/>
</dbReference>
<dbReference type="PANTHER" id="PTHR31053:SF2">
    <property type="entry name" value="MAGNESIUM-PROTOPORPHYRIN IX MONOMETHYL ESTER [OXIDATIVE] CYCLASE, CHLOROPLASTIC"/>
    <property type="match status" value="1"/>
</dbReference>
<dbReference type="Pfam" id="PF02915">
    <property type="entry name" value="Rubrerythrin"/>
    <property type="match status" value="1"/>
</dbReference>
<dbReference type="SUPFAM" id="SSF47240">
    <property type="entry name" value="Ferritin-like"/>
    <property type="match status" value="1"/>
</dbReference>
<name>ACSF_PROM3</name>